<dbReference type="EC" id="2.7.7.4" evidence="1"/>
<dbReference type="EMBL" id="CP000950">
    <property type="protein sequence ID" value="ACA69703.1"/>
    <property type="molecule type" value="Genomic_DNA"/>
</dbReference>
<dbReference type="RefSeq" id="WP_002209386.1">
    <property type="nucleotide sequence ID" value="NZ_CP009792.1"/>
</dbReference>
<dbReference type="SMR" id="B1JJG3"/>
<dbReference type="GeneID" id="57975343"/>
<dbReference type="KEGG" id="ypy:YPK_3436"/>
<dbReference type="PATRIC" id="fig|502800.11.peg.4174"/>
<dbReference type="UniPathway" id="UPA00140">
    <property type="reaction ID" value="UER00204"/>
</dbReference>
<dbReference type="GO" id="GO:0005524">
    <property type="term" value="F:ATP binding"/>
    <property type="evidence" value="ECO:0007669"/>
    <property type="project" value="UniProtKB-KW"/>
</dbReference>
<dbReference type="GO" id="GO:0004781">
    <property type="term" value="F:sulfate adenylyltransferase (ATP) activity"/>
    <property type="evidence" value="ECO:0007669"/>
    <property type="project" value="UniProtKB-UniRule"/>
</dbReference>
<dbReference type="GO" id="GO:0070814">
    <property type="term" value="P:hydrogen sulfide biosynthetic process"/>
    <property type="evidence" value="ECO:0007669"/>
    <property type="project" value="UniProtKB-UniRule"/>
</dbReference>
<dbReference type="GO" id="GO:0000103">
    <property type="term" value="P:sulfate assimilation"/>
    <property type="evidence" value="ECO:0007669"/>
    <property type="project" value="UniProtKB-UniRule"/>
</dbReference>
<dbReference type="CDD" id="cd23946">
    <property type="entry name" value="Sulfate_adenylyltransferase_2"/>
    <property type="match status" value="1"/>
</dbReference>
<dbReference type="FunFam" id="3.40.50.620:FF:000002">
    <property type="entry name" value="Sulfate adenylyltransferase subunit 2"/>
    <property type="match status" value="1"/>
</dbReference>
<dbReference type="Gene3D" id="3.40.50.620">
    <property type="entry name" value="HUPs"/>
    <property type="match status" value="1"/>
</dbReference>
<dbReference type="HAMAP" id="MF_00064">
    <property type="entry name" value="Sulf_adenylyltr_sub2"/>
    <property type="match status" value="1"/>
</dbReference>
<dbReference type="InterPro" id="IPR002500">
    <property type="entry name" value="PAPS_reduct_dom"/>
</dbReference>
<dbReference type="InterPro" id="IPR014729">
    <property type="entry name" value="Rossmann-like_a/b/a_fold"/>
</dbReference>
<dbReference type="InterPro" id="IPR011784">
    <property type="entry name" value="SO4_adenylTrfase_ssu"/>
</dbReference>
<dbReference type="InterPro" id="IPR050128">
    <property type="entry name" value="Sulfate_adenylyltrnsfr_sub2"/>
</dbReference>
<dbReference type="NCBIfam" id="TIGR02039">
    <property type="entry name" value="CysD"/>
    <property type="match status" value="1"/>
</dbReference>
<dbReference type="NCBIfam" id="NF003587">
    <property type="entry name" value="PRK05253.1"/>
    <property type="match status" value="1"/>
</dbReference>
<dbReference type="NCBIfam" id="NF009214">
    <property type="entry name" value="PRK12563.1"/>
    <property type="match status" value="1"/>
</dbReference>
<dbReference type="PANTHER" id="PTHR43196">
    <property type="entry name" value="SULFATE ADENYLYLTRANSFERASE SUBUNIT 2"/>
    <property type="match status" value="1"/>
</dbReference>
<dbReference type="PANTHER" id="PTHR43196:SF1">
    <property type="entry name" value="SULFATE ADENYLYLTRANSFERASE SUBUNIT 2"/>
    <property type="match status" value="1"/>
</dbReference>
<dbReference type="Pfam" id="PF01507">
    <property type="entry name" value="PAPS_reduct"/>
    <property type="match status" value="1"/>
</dbReference>
<dbReference type="PIRSF" id="PIRSF002936">
    <property type="entry name" value="CysDAde_trans"/>
    <property type="match status" value="1"/>
</dbReference>
<dbReference type="SUPFAM" id="SSF52402">
    <property type="entry name" value="Adenine nucleotide alpha hydrolases-like"/>
    <property type="match status" value="1"/>
</dbReference>
<accession>B1JJG3</accession>
<gene>
    <name evidence="1" type="primary">cysD</name>
    <name type="ordered locus">YPK_3436</name>
</gene>
<evidence type="ECO:0000255" key="1">
    <source>
        <dbReference type="HAMAP-Rule" id="MF_00064"/>
    </source>
</evidence>
<reference key="1">
    <citation type="submission" date="2008-02" db="EMBL/GenBank/DDBJ databases">
        <title>Complete sequence of Yersinia pseudotuberculosis YPIII.</title>
        <authorList>
            <consortium name="US DOE Joint Genome Institute"/>
            <person name="Copeland A."/>
            <person name="Lucas S."/>
            <person name="Lapidus A."/>
            <person name="Glavina del Rio T."/>
            <person name="Dalin E."/>
            <person name="Tice H."/>
            <person name="Bruce D."/>
            <person name="Goodwin L."/>
            <person name="Pitluck S."/>
            <person name="Munk A.C."/>
            <person name="Brettin T."/>
            <person name="Detter J.C."/>
            <person name="Han C."/>
            <person name="Tapia R."/>
            <person name="Schmutz J."/>
            <person name="Larimer F."/>
            <person name="Land M."/>
            <person name="Hauser L."/>
            <person name="Challacombe J.F."/>
            <person name="Green L."/>
            <person name="Lindler L.E."/>
            <person name="Nikolich M.P."/>
            <person name="Richardson P."/>
        </authorList>
    </citation>
    <scope>NUCLEOTIDE SEQUENCE [LARGE SCALE GENOMIC DNA]</scope>
    <source>
        <strain>YPIII</strain>
    </source>
</reference>
<proteinExistence type="inferred from homology"/>
<sequence length="302" mass="35187">MDEKRLTHLRQLEAESIHIIREVAAEFGNPVMLYSIGKDSSVMLHLARKAFFPGHLPFPLLHVDTGWKFREMYEFRDHTVKEFGCELLVHRNPEGVAMGINPFVHGSAKHTDIMKTEGLKQALNKYGFDAAFGGARRDEEKSRAKERIYSFRDRFHRWDPKNQRPELWHNYNGQINKGESIRVFPLSNWTELDIWQYIFLEKIEIVPLYLAKPRPVVERDGMLLMVDDDRIDLQPGEVIVQKKVRFRTLGCWPLTGAVESEAETLPAIIEEMLISTTSERQGRMIDRDQSGSMELKKRQGYF</sequence>
<protein>
    <recommendedName>
        <fullName evidence="1">Sulfate adenylyltransferase subunit 2</fullName>
        <ecNumber evidence="1">2.7.7.4</ecNumber>
    </recommendedName>
    <alternativeName>
        <fullName evidence="1">ATP-sulfurylase small subunit</fullName>
    </alternativeName>
    <alternativeName>
        <fullName evidence="1">Sulfate adenylate transferase</fullName>
        <shortName evidence="1">SAT</shortName>
    </alternativeName>
</protein>
<feature type="chain" id="PRO_1000092234" description="Sulfate adenylyltransferase subunit 2">
    <location>
        <begin position="1"/>
        <end position="302"/>
    </location>
</feature>
<name>CYSD_YERPY</name>
<keyword id="KW-0067">ATP-binding</keyword>
<keyword id="KW-0547">Nucleotide-binding</keyword>
<keyword id="KW-0548">Nucleotidyltransferase</keyword>
<keyword id="KW-0808">Transferase</keyword>
<organism>
    <name type="scientific">Yersinia pseudotuberculosis serotype O:3 (strain YPIII)</name>
    <dbReference type="NCBI Taxonomy" id="502800"/>
    <lineage>
        <taxon>Bacteria</taxon>
        <taxon>Pseudomonadati</taxon>
        <taxon>Pseudomonadota</taxon>
        <taxon>Gammaproteobacteria</taxon>
        <taxon>Enterobacterales</taxon>
        <taxon>Yersiniaceae</taxon>
        <taxon>Yersinia</taxon>
    </lineage>
</organism>
<comment type="function">
    <text evidence="1">With CysN forms the ATP sulfurylase (ATPS) that catalyzes the adenylation of sulfate producing adenosine 5'-phosphosulfate (APS) and diphosphate, the first enzymatic step in sulfur assimilation pathway. APS synthesis involves the formation of a high-energy phosphoric-sulfuric acid anhydride bond driven by GTP hydrolysis by CysN coupled to ATP hydrolysis by CysD.</text>
</comment>
<comment type="catalytic activity">
    <reaction evidence="1">
        <text>sulfate + ATP + H(+) = adenosine 5'-phosphosulfate + diphosphate</text>
        <dbReference type="Rhea" id="RHEA:18133"/>
        <dbReference type="ChEBI" id="CHEBI:15378"/>
        <dbReference type="ChEBI" id="CHEBI:16189"/>
        <dbReference type="ChEBI" id="CHEBI:30616"/>
        <dbReference type="ChEBI" id="CHEBI:33019"/>
        <dbReference type="ChEBI" id="CHEBI:58243"/>
        <dbReference type="EC" id="2.7.7.4"/>
    </reaction>
</comment>
<comment type="pathway">
    <text evidence="1">Sulfur metabolism; hydrogen sulfide biosynthesis; sulfite from sulfate: step 1/3.</text>
</comment>
<comment type="subunit">
    <text evidence="1">Heterodimer composed of CysD, the smaller subunit, and CysN.</text>
</comment>
<comment type="similarity">
    <text evidence="1">Belongs to the PAPS reductase family. CysD subfamily.</text>
</comment>